<name>MDTD_ECOL5</name>
<comment type="subcellular location">
    <subcellularLocation>
        <location evidence="1">Cell inner membrane</location>
        <topology evidence="1">Multi-pass membrane protein</topology>
    </subcellularLocation>
</comment>
<comment type="similarity">
    <text evidence="1">Belongs to the major facilitator superfamily. TCR/Tet family.</text>
</comment>
<sequence length="471" mass="50863">MTDLPDSTRWRLWIVAFGFFMQSLDTTIVNTALPSMAQSLGESPLHMHMVIVSYVLTVAVMLPASGWLADKVGVRNIFFTAIVLFTLGSLFCALSGTLNELLLARALQGVGGAMMVPVGRLTVMKIVPREQYMAAMTFVTLPGQVGPLLGPALGGLLVEYASWHWIFLINIPVGIIGAIATLMLMPNYTMQTRRFDLSGFLLLAVGMAVLTLALDGSKGTGLSPLAIAGLVAVGVVALVLYLLHAQNNNRALFSLKLFRTRTFSLGLAGSFAGRIGSGMLPFMTPVFLQIGLGFSPFHAGLMMIPMVLGSMGMKRIVVQVVNRFGYRRVLVATTLGLSLVTLLFMTTALLGWYYVLPFVLFLQGMVNSTRFSSMNTLTLKDLPDNLASSGNSLLSMIMQLSMSIGVTIAGLLLGLFGSQHVSVDSGTTQTVFMYTWLSMASIIALPAFIFARVPNDTHQNVAISRRKRSAQ</sequence>
<accession>Q0TG13</accession>
<protein>
    <recommendedName>
        <fullName evidence="1">Putative multidrug resistance protein MdtD</fullName>
    </recommendedName>
</protein>
<organism>
    <name type="scientific">Escherichia coli O6:K15:H31 (strain 536 / UPEC)</name>
    <dbReference type="NCBI Taxonomy" id="362663"/>
    <lineage>
        <taxon>Bacteria</taxon>
        <taxon>Pseudomonadati</taxon>
        <taxon>Pseudomonadota</taxon>
        <taxon>Gammaproteobacteria</taxon>
        <taxon>Enterobacterales</taxon>
        <taxon>Enterobacteriaceae</taxon>
        <taxon>Escherichia</taxon>
    </lineage>
</organism>
<dbReference type="EMBL" id="CP000247">
    <property type="protein sequence ID" value="ABG70116.1"/>
    <property type="molecule type" value="Genomic_DNA"/>
</dbReference>
<dbReference type="RefSeq" id="WP_000130908.1">
    <property type="nucleotide sequence ID" value="NC_008253.1"/>
</dbReference>
<dbReference type="SMR" id="Q0TG13"/>
<dbReference type="KEGG" id="ecp:ECP_2117"/>
<dbReference type="HOGENOM" id="CLU_000960_28_0_6"/>
<dbReference type="Proteomes" id="UP000009182">
    <property type="component" value="Chromosome"/>
</dbReference>
<dbReference type="GO" id="GO:0005886">
    <property type="term" value="C:plasma membrane"/>
    <property type="evidence" value="ECO:0007669"/>
    <property type="project" value="UniProtKB-SubCell"/>
</dbReference>
<dbReference type="GO" id="GO:0022857">
    <property type="term" value="F:transmembrane transporter activity"/>
    <property type="evidence" value="ECO:0007669"/>
    <property type="project" value="UniProtKB-UniRule"/>
</dbReference>
<dbReference type="CDD" id="cd17503">
    <property type="entry name" value="MFS_LmrB_MDR_like"/>
    <property type="match status" value="1"/>
</dbReference>
<dbReference type="FunFam" id="1.20.1250.20:FF:000021">
    <property type="entry name" value="Putative multidrug resistance protein MdtD"/>
    <property type="match status" value="1"/>
</dbReference>
<dbReference type="FunFam" id="1.20.1720.10:FF:000001">
    <property type="entry name" value="Putative multidrug resistance protein MdtD"/>
    <property type="match status" value="1"/>
</dbReference>
<dbReference type="Gene3D" id="1.20.1250.20">
    <property type="entry name" value="MFS general substrate transporter like domains"/>
    <property type="match status" value="1"/>
</dbReference>
<dbReference type="Gene3D" id="1.20.1720.10">
    <property type="entry name" value="Multidrug resistance protein D"/>
    <property type="match status" value="1"/>
</dbReference>
<dbReference type="HAMAP" id="MF_01577">
    <property type="entry name" value="MFS_MdtD"/>
    <property type="match status" value="1"/>
</dbReference>
<dbReference type="InterPro" id="IPR004638">
    <property type="entry name" value="EmrB-like"/>
</dbReference>
<dbReference type="InterPro" id="IPR011701">
    <property type="entry name" value="MFS"/>
</dbReference>
<dbReference type="InterPro" id="IPR020846">
    <property type="entry name" value="MFS_dom"/>
</dbReference>
<dbReference type="InterPro" id="IPR036259">
    <property type="entry name" value="MFS_trans_sf"/>
</dbReference>
<dbReference type="InterPro" id="IPR023721">
    <property type="entry name" value="Multi-R_MdtD"/>
</dbReference>
<dbReference type="NCBIfam" id="TIGR00711">
    <property type="entry name" value="efflux_EmrB"/>
    <property type="match status" value="1"/>
</dbReference>
<dbReference type="NCBIfam" id="NF007799">
    <property type="entry name" value="PRK10504.1"/>
    <property type="match status" value="1"/>
</dbReference>
<dbReference type="PANTHER" id="PTHR42718:SF46">
    <property type="entry name" value="BLR6921 PROTEIN"/>
    <property type="match status" value="1"/>
</dbReference>
<dbReference type="PANTHER" id="PTHR42718">
    <property type="entry name" value="MAJOR FACILITATOR SUPERFAMILY MULTIDRUG TRANSPORTER MFSC"/>
    <property type="match status" value="1"/>
</dbReference>
<dbReference type="Pfam" id="PF07690">
    <property type="entry name" value="MFS_1"/>
    <property type="match status" value="1"/>
</dbReference>
<dbReference type="PRINTS" id="PR01036">
    <property type="entry name" value="TCRTETB"/>
</dbReference>
<dbReference type="SUPFAM" id="SSF103473">
    <property type="entry name" value="MFS general substrate transporter"/>
    <property type="match status" value="1"/>
</dbReference>
<dbReference type="PROSITE" id="PS50850">
    <property type="entry name" value="MFS"/>
    <property type="match status" value="1"/>
</dbReference>
<keyword id="KW-0997">Cell inner membrane</keyword>
<keyword id="KW-1003">Cell membrane</keyword>
<keyword id="KW-0472">Membrane</keyword>
<keyword id="KW-0812">Transmembrane</keyword>
<keyword id="KW-1133">Transmembrane helix</keyword>
<keyword id="KW-0813">Transport</keyword>
<proteinExistence type="inferred from homology"/>
<reference key="1">
    <citation type="journal article" date="2006" name="Mol. Microbiol.">
        <title>Role of pathogenicity island-associated integrases in the genome plasticity of uropathogenic Escherichia coli strain 536.</title>
        <authorList>
            <person name="Hochhut B."/>
            <person name="Wilde C."/>
            <person name="Balling G."/>
            <person name="Middendorf B."/>
            <person name="Dobrindt U."/>
            <person name="Brzuszkiewicz E."/>
            <person name="Gottschalk G."/>
            <person name="Carniel E."/>
            <person name="Hacker J."/>
        </authorList>
    </citation>
    <scope>NUCLEOTIDE SEQUENCE [LARGE SCALE GENOMIC DNA]</scope>
    <source>
        <strain>536 / UPEC</strain>
    </source>
</reference>
<evidence type="ECO:0000255" key="1">
    <source>
        <dbReference type="HAMAP-Rule" id="MF_01577"/>
    </source>
</evidence>
<feature type="chain" id="PRO_0000268592" description="Putative multidrug resistance protein MdtD">
    <location>
        <begin position="1"/>
        <end position="471"/>
    </location>
</feature>
<feature type="topological domain" description="Periplasmic" evidence="1">
    <location>
        <begin position="1"/>
        <end position="11"/>
    </location>
</feature>
<feature type="transmembrane region" description="Helical" evidence="1">
    <location>
        <begin position="12"/>
        <end position="32"/>
    </location>
</feature>
<feature type="topological domain" description="Cytoplasmic" evidence="1">
    <location>
        <begin position="33"/>
        <end position="48"/>
    </location>
</feature>
<feature type="transmembrane region" description="Helical" evidence="1">
    <location>
        <begin position="49"/>
        <end position="69"/>
    </location>
</feature>
<feature type="topological domain" description="Periplasmic" evidence="1">
    <location>
        <begin position="70"/>
        <end position="76"/>
    </location>
</feature>
<feature type="transmembrane region" description="Helical" evidence="1">
    <location>
        <begin position="77"/>
        <end position="97"/>
    </location>
</feature>
<feature type="topological domain" description="Cytoplasmic" evidence="1">
    <location>
        <begin position="98"/>
        <end position="101"/>
    </location>
</feature>
<feature type="transmembrane region" description="Helical" evidence="1">
    <location>
        <begin position="102"/>
        <end position="124"/>
    </location>
</feature>
<feature type="topological domain" description="Periplasmic" evidence="1">
    <location>
        <begin position="125"/>
        <end position="137"/>
    </location>
</feature>
<feature type="transmembrane region" description="Helical" evidence="1">
    <location>
        <begin position="138"/>
        <end position="158"/>
    </location>
</feature>
<feature type="topological domain" description="Cytoplasmic" evidence="1">
    <location>
        <begin position="159"/>
        <end position="164"/>
    </location>
</feature>
<feature type="transmembrane region" description="Helical" evidence="1">
    <location>
        <begin position="165"/>
        <end position="185"/>
    </location>
</feature>
<feature type="topological domain" description="Periplasmic" evidence="1">
    <location>
        <begin position="186"/>
        <end position="196"/>
    </location>
</feature>
<feature type="transmembrane region" description="Helical" evidence="1">
    <location>
        <begin position="197"/>
        <end position="217"/>
    </location>
</feature>
<feature type="topological domain" description="Cytoplasmic" evidence="1">
    <location>
        <begin position="218"/>
        <end position="224"/>
    </location>
</feature>
<feature type="transmembrane region" description="Helical" evidence="1">
    <location>
        <begin position="225"/>
        <end position="245"/>
    </location>
</feature>
<feature type="topological domain" description="Periplasmic" evidence="1">
    <location>
        <begin position="246"/>
        <end position="262"/>
    </location>
</feature>
<feature type="transmembrane region" description="Helical" evidence="1">
    <location>
        <begin position="263"/>
        <end position="283"/>
    </location>
</feature>
<feature type="topological domain" description="Cytoplasmic" evidence="1">
    <location>
        <begin position="284"/>
        <end position="285"/>
    </location>
</feature>
<feature type="transmembrane region" description="Helical" evidence="1">
    <location>
        <begin position="286"/>
        <end position="306"/>
    </location>
</feature>
<feature type="topological domain" description="Periplasmic" evidence="1">
    <location>
        <begin position="307"/>
        <end position="341"/>
    </location>
</feature>
<feature type="transmembrane region" description="Helical" evidence="1">
    <location>
        <begin position="342"/>
        <end position="362"/>
    </location>
</feature>
<feature type="topological domain" description="Cytoplasmic" evidence="1">
    <location>
        <begin position="363"/>
        <end position="395"/>
    </location>
</feature>
<feature type="transmembrane region" description="Helical" evidence="1">
    <location>
        <begin position="396"/>
        <end position="416"/>
    </location>
</feature>
<feature type="topological domain" description="Periplasmic" evidence="1">
    <location>
        <begin position="417"/>
        <end position="430"/>
    </location>
</feature>
<feature type="transmembrane region" description="Helical" evidence="1">
    <location>
        <begin position="431"/>
        <end position="451"/>
    </location>
</feature>
<feature type="topological domain" description="Cytoplasmic" evidence="1">
    <location>
        <begin position="452"/>
        <end position="471"/>
    </location>
</feature>
<gene>
    <name evidence="1" type="primary">mdtD</name>
    <name type="ordered locus">ECP_2117</name>
</gene>